<evidence type="ECO:0000250" key="1"/>
<evidence type="ECO:0000255" key="2"/>
<evidence type="ECO:0000256" key="3">
    <source>
        <dbReference type="SAM" id="MobiDB-lite"/>
    </source>
</evidence>
<evidence type="ECO:0000305" key="4"/>
<feature type="chain" id="PRO_0000383717" description="Cytosolic Fe-S cluster assembly factor nar1">
    <location>
        <begin position="1"/>
        <end position="597"/>
    </location>
</feature>
<feature type="region of interest" description="Disordered" evidence="3">
    <location>
        <begin position="428"/>
        <end position="449"/>
    </location>
</feature>
<feature type="region of interest" description="Disordered" evidence="3">
    <location>
        <begin position="479"/>
        <end position="505"/>
    </location>
</feature>
<feature type="binding site" evidence="2">
    <location>
        <position position="20"/>
    </location>
    <ligand>
        <name>[4Fe-4S] cluster</name>
        <dbReference type="ChEBI" id="CHEBI:49883"/>
        <label>1</label>
    </ligand>
</feature>
<feature type="binding site" evidence="2">
    <location>
        <position position="62"/>
    </location>
    <ligand>
        <name>[4Fe-4S] cluster</name>
        <dbReference type="ChEBI" id="CHEBI:49883"/>
        <label>1</label>
    </ligand>
</feature>
<feature type="binding site" evidence="2">
    <location>
        <position position="65"/>
    </location>
    <ligand>
        <name>[4Fe-4S] cluster</name>
        <dbReference type="ChEBI" id="CHEBI:49883"/>
        <label>1</label>
    </ligand>
</feature>
<feature type="binding site" evidence="2">
    <location>
        <position position="68"/>
    </location>
    <ligand>
        <name>[4Fe-4S] cluster</name>
        <dbReference type="ChEBI" id="CHEBI:49883"/>
        <label>1</label>
    </ligand>
</feature>
<feature type="binding site" evidence="2">
    <location>
        <position position="216"/>
    </location>
    <ligand>
        <name>[4Fe-4S] cluster</name>
        <dbReference type="ChEBI" id="CHEBI:49883"/>
        <label>2</label>
    </ligand>
</feature>
<feature type="binding site" evidence="2">
    <location>
        <position position="271"/>
    </location>
    <ligand>
        <name>[4Fe-4S] cluster</name>
        <dbReference type="ChEBI" id="CHEBI:49883"/>
        <label>2</label>
    </ligand>
</feature>
<feature type="binding site" evidence="2">
    <location>
        <position position="462"/>
    </location>
    <ligand>
        <name>[4Fe-4S] cluster</name>
        <dbReference type="ChEBI" id="CHEBI:49883"/>
        <label>2</label>
    </ligand>
</feature>
<feature type="binding site" evidence="2">
    <location>
        <position position="466"/>
    </location>
    <ligand>
        <name>[4Fe-4S] cluster</name>
        <dbReference type="ChEBI" id="CHEBI:49883"/>
        <label>2</label>
    </ligand>
</feature>
<dbReference type="EMBL" id="AM269972">
    <property type="protein sequence ID" value="CAK43843.1"/>
    <property type="molecule type" value="Genomic_DNA"/>
</dbReference>
<dbReference type="RefSeq" id="XP_001389148.1">
    <property type="nucleotide sequence ID" value="XM_001389111.1"/>
</dbReference>
<dbReference type="SMR" id="A2Q9A9"/>
<dbReference type="EnsemblFungi" id="CAK43843">
    <property type="protein sequence ID" value="CAK43843"/>
    <property type="gene ID" value="An01g07240"/>
</dbReference>
<dbReference type="GeneID" id="4978195"/>
<dbReference type="KEGG" id="ang:An01g07240"/>
<dbReference type="VEuPathDB" id="FungiDB:An01g07240"/>
<dbReference type="HOGENOM" id="CLU_018240_0_1_1"/>
<dbReference type="Proteomes" id="UP000006706">
    <property type="component" value="Chromosome 2R"/>
</dbReference>
<dbReference type="GO" id="GO:0051539">
    <property type="term" value="F:4 iron, 4 sulfur cluster binding"/>
    <property type="evidence" value="ECO:0007669"/>
    <property type="project" value="UniProtKB-KW"/>
</dbReference>
<dbReference type="GO" id="GO:0051536">
    <property type="term" value="F:iron-sulfur cluster binding"/>
    <property type="evidence" value="ECO:0000250"/>
    <property type="project" value="UniProtKB"/>
</dbReference>
<dbReference type="GO" id="GO:0046872">
    <property type="term" value="F:metal ion binding"/>
    <property type="evidence" value="ECO:0007669"/>
    <property type="project" value="UniProtKB-KW"/>
</dbReference>
<dbReference type="GO" id="GO:0016226">
    <property type="term" value="P:iron-sulfur cluster assembly"/>
    <property type="evidence" value="ECO:0000250"/>
    <property type="project" value="UniProtKB"/>
</dbReference>
<dbReference type="FunFam" id="3.30.70.20:FF:000042">
    <property type="entry name" value="Cytosolic Fe-S cluster assembly factor NAR1"/>
    <property type="match status" value="1"/>
</dbReference>
<dbReference type="FunFam" id="3.40.50.1780:FF:000004">
    <property type="entry name" value="Cytosolic Fe-S cluster assembly factor nar1"/>
    <property type="match status" value="1"/>
</dbReference>
<dbReference type="Gene3D" id="3.40.50.1780">
    <property type="match status" value="1"/>
</dbReference>
<dbReference type="Gene3D" id="3.40.950.10">
    <property type="entry name" value="Fe-only Hydrogenase (Larger Subunit), Chain L, domain 3"/>
    <property type="match status" value="1"/>
</dbReference>
<dbReference type="InterPro" id="IPR050340">
    <property type="entry name" value="Cytosolic_Fe-S_CAF"/>
</dbReference>
<dbReference type="InterPro" id="IPR009016">
    <property type="entry name" value="Fe_hydrogenase"/>
</dbReference>
<dbReference type="InterPro" id="IPR004108">
    <property type="entry name" value="Fe_hydrogenase_lsu_C"/>
</dbReference>
<dbReference type="PANTHER" id="PTHR11615">
    <property type="entry name" value="NITRATE, FORMATE, IRON DEHYDROGENASE"/>
    <property type="match status" value="1"/>
</dbReference>
<dbReference type="Pfam" id="PF02906">
    <property type="entry name" value="Fe_hyd_lg_C"/>
    <property type="match status" value="1"/>
</dbReference>
<dbReference type="SUPFAM" id="SSF53920">
    <property type="entry name" value="Fe-only hydrogenase"/>
    <property type="match status" value="1"/>
</dbReference>
<accession>A2Q9A9</accession>
<comment type="function">
    <text evidence="1">Component of the cytosolic Fe/S protein assembly machinery. Required for maturation of extramitochondrial Fe/S proteins. May play a role in the transfer of pre-assembled Fe/S clusters to target apoproteins (By similarity).</text>
</comment>
<comment type="similarity">
    <text evidence="4">Belongs to the NARF family.</text>
</comment>
<organism>
    <name type="scientific">Aspergillus niger (strain ATCC MYA-4892 / CBS 513.88 / FGSC A1513)</name>
    <dbReference type="NCBI Taxonomy" id="425011"/>
    <lineage>
        <taxon>Eukaryota</taxon>
        <taxon>Fungi</taxon>
        <taxon>Dikarya</taxon>
        <taxon>Ascomycota</taxon>
        <taxon>Pezizomycotina</taxon>
        <taxon>Eurotiomycetes</taxon>
        <taxon>Eurotiomycetidae</taxon>
        <taxon>Eurotiales</taxon>
        <taxon>Aspergillaceae</taxon>
        <taxon>Aspergillus</taxon>
        <taxon>Aspergillus subgen. Circumdati</taxon>
    </lineage>
</organism>
<keyword id="KW-0004">4Fe-4S</keyword>
<keyword id="KW-0408">Iron</keyword>
<keyword id="KW-0411">Iron-sulfur</keyword>
<keyword id="KW-0479">Metal-binding</keyword>
<keyword id="KW-1185">Reference proteome</keyword>
<reference key="1">
    <citation type="journal article" date="2007" name="Nat. Biotechnol.">
        <title>Genome sequencing and analysis of the versatile cell factory Aspergillus niger CBS 513.88.</title>
        <authorList>
            <person name="Pel H.J."/>
            <person name="de Winde J.H."/>
            <person name="Archer D.B."/>
            <person name="Dyer P.S."/>
            <person name="Hofmann G."/>
            <person name="Schaap P.J."/>
            <person name="Turner G."/>
            <person name="de Vries R.P."/>
            <person name="Albang R."/>
            <person name="Albermann K."/>
            <person name="Andersen M.R."/>
            <person name="Bendtsen J.D."/>
            <person name="Benen J.A.E."/>
            <person name="van den Berg M."/>
            <person name="Breestraat S."/>
            <person name="Caddick M.X."/>
            <person name="Contreras R."/>
            <person name="Cornell M."/>
            <person name="Coutinho P.M."/>
            <person name="Danchin E.G.J."/>
            <person name="Debets A.J.M."/>
            <person name="Dekker P."/>
            <person name="van Dijck P.W.M."/>
            <person name="van Dijk A."/>
            <person name="Dijkhuizen L."/>
            <person name="Driessen A.J.M."/>
            <person name="d'Enfert C."/>
            <person name="Geysens S."/>
            <person name="Goosen C."/>
            <person name="Groot G.S.P."/>
            <person name="de Groot P.W.J."/>
            <person name="Guillemette T."/>
            <person name="Henrissat B."/>
            <person name="Herweijer M."/>
            <person name="van den Hombergh J.P.T.W."/>
            <person name="van den Hondel C.A.M.J.J."/>
            <person name="van der Heijden R.T.J.M."/>
            <person name="van der Kaaij R.M."/>
            <person name="Klis F.M."/>
            <person name="Kools H.J."/>
            <person name="Kubicek C.P."/>
            <person name="van Kuyk P.A."/>
            <person name="Lauber J."/>
            <person name="Lu X."/>
            <person name="van der Maarel M.J.E.C."/>
            <person name="Meulenberg R."/>
            <person name="Menke H."/>
            <person name="Mortimer M.A."/>
            <person name="Nielsen J."/>
            <person name="Oliver S.G."/>
            <person name="Olsthoorn M."/>
            <person name="Pal K."/>
            <person name="van Peij N.N.M.E."/>
            <person name="Ram A.F.J."/>
            <person name="Rinas U."/>
            <person name="Roubos J.A."/>
            <person name="Sagt C.M.J."/>
            <person name="Schmoll M."/>
            <person name="Sun J."/>
            <person name="Ussery D."/>
            <person name="Varga J."/>
            <person name="Vervecken W."/>
            <person name="van de Vondervoort P.J.J."/>
            <person name="Wedler H."/>
            <person name="Woesten H.A.B."/>
            <person name="Zeng A.-P."/>
            <person name="van Ooyen A.J.J."/>
            <person name="Visser J."/>
            <person name="Stam H."/>
        </authorList>
    </citation>
    <scope>NUCLEOTIDE SEQUENCE [LARGE SCALE GENOMIC DNA]</scope>
    <source>
        <strain>ATCC MYA-4892 / CBS 513.88 / FGSC A1513</strain>
    </source>
</reference>
<protein>
    <recommendedName>
        <fullName>Cytosolic Fe-S cluster assembly factor nar1</fullName>
    </recommendedName>
    <alternativeName>
        <fullName>Nuclear architecture-related protein 1</fullName>
    </alternativeName>
</protein>
<name>NAR1_ASPNC</name>
<proteinExistence type="inferred from homology"/>
<gene>
    <name type="primary">nar1</name>
    <name type="ORF">An01g07240</name>
</gene>
<sequence>MSAILSADDLNDFISPGVACIKPVETLPAKDPSKTDNPYEVTTEDKVQPENLPPAQISLTDCLACSGCVTSAEAVLISLQSHAEVLNTLDAHPELPLNREDGTITQELGTASDEGRVFVASVSPQVRASLAATYGITEKEATYMIHQFLSGPHGLRAGGKNGSGFTWVADTNVLREAVLVLTADEVGETLTTSPDSPSTNGATNTLPKRPILSSACPGWICYAEKTHPFVLPHLSRLKSPQALAGTFFKTVLSKSLGIPASRIWHLAVMPCFDKKLEASREELTDASWLSAKDEDHTAVRDVDCVITTREMLSLASSRGISLPNLPLKSLPQSYIPPFPDMTLNDFLFSKSSPGQSAAAGTSGGYLHHVLQTFQARNPGSEIVTQRGRNADVVEYTLMSSEHTPILKAARYYGFRNIQNLVRKLKPARASRLPGGNRRLPVGRGAASGSSGTDYAYVEVMACPGGCTNGGGQIRIEDAREASSSVQSSTSAEVPDSSSKPTPHEQRAWLARVDEAYYSAESDTESEAGSQSQPLSILDKEDKIHNAMRYWSDSMGIPLSKLAYTTYREVESDVGKSQPAATDTTRVAELAGKIGGGW</sequence>